<protein>
    <recommendedName>
        <fullName evidence="1">Protein YcgL</fullName>
    </recommendedName>
</protein>
<accession>A7ZKV0</accession>
<evidence type="ECO:0000255" key="1">
    <source>
        <dbReference type="HAMAP-Rule" id="MF_01866"/>
    </source>
</evidence>
<evidence type="ECO:0000305" key="2"/>
<comment type="sequence caution" evidence="2">
    <conflict type="erroneous initiation">
        <sequence resource="EMBL-CDS" id="ABV17014"/>
    </conflict>
</comment>
<gene>
    <name evidence="1" type="primary">ycgL</name>
    <name type="ordered locus">EcE24377A_1323</name>
</gene>
<feature type="chain" id="PRO_0000375296" description="Protein YcgL">
    <location>
        <begin position="1"/>
        <end position="108"/>
    </location>
</feature>
<feature type="domain" description="YcgL" evidence="1">
    <location>
        <begin position="12"/>
        <end position="96"/>
    </location>
</feature>
<reference key="1">
    <citation type="journal article" date="2008" name="J. Bacteriol.">
        <title>The pangenome structure of Escherichia coli: comparative genomic analysis of E. coli commensal and pathogenic isolates.</title>
        <authorList>
            <person name="Rasko D.A."/>
            <person name="Rosovitz M.J."/>
            <person name="Myers G.S.A."/>
            <person name="Mongodin E.F."/>
            <person name="Fricke W.F."/>
            <person name="Gajer P."/>
            <person name="Crabtree J."/>
            <person name="Sebaihia M."/>
            <person name="Thomson N.R."/>
            <person name="Chaudhuri R."/>
            <person name="Henderson I.R."/>
            <person name="Sperandio V."/>
            <person name="Ravel J."/>
        </authorList>
    </citation>
    <scope>NUCLEOTIDE SEQUENCE [LARGE SCALE GENOMIC DNA]</scope>
    <source>
        <strain>E24377A / ETEC</strain>
    </source>
</reference>
<sequence>MPKPGILKSKSMFCVIYRSSKRDQTYLYVEKKDDFSRVPEELMKGFGQPQLAMILPLDGRKKLVNADIEKVKLALTEQGYYLQLPPPPEDLLKQHLSVMGQKTDDTNK</sequence>
<keyword id="KW-1185">Reference proteome</keyword>
<name>YCGL_ECO24</name>
<proteinExistence type="inferred from homology"/>
<organism>
    <name type="scientific">Escherichia coli O139:H28 (strain E24377A / ETEC)</name>
    <dbReference type="NCBI Taxonomy" id="331111"/>
    <lineage>
        <taxon>Bacteria</taxon>
        <taxon>Pseudomonadati</taxon>
        <taxon>Pseudomonadota</taxon>
        <taxon>Gammaproteobacteria</taxon>
        <taxon>Enterobacterales</taxon>
        <taxon>Enterobacteriaceae</taxon>
        <taxon>Escherichia</taxon>
    </lineage>
</organism>
<dbReference type="EMBL" id="CP000800">
    <property type="protein sequence ID" value="ABV17014.1"/>
    <property type="status" value="ALT_INIT"/>
    <property type="molecule type" value="Genomic_DNA"/>
</dbReference>
<dbReference type="BMRB" id="A7ZKV0"/>
<dbReference type="SMR" id="A7ZKV0"/>
<dbReference type="KEGG" id="ecw:EcE24377A_1323"/>
<dbReference type="HOGENOM" id="CLU_155118_1_0_6"/>
<dbReference type="Proteomes" id="UP000001122">
    <property type="component" value="Chromosome"/>
</dbReference>
<dbReference type="Gene3D" id="3.10.510.20">
    <property type="entry name" value="YcgL domain"/>
    <property type="match status" value="1"/>
</dbReference>
<dbReference type="HAMAP" id="MF_01866">
    <property type="entry name" value="UPF0745"/>
    <property type="match status" value="1"/>
</dbReference>
<dbReference type="InterPro" id="IPR038068">
    <property type="entry name" value="YcgL-like_sf"/>
</dbReference>
<dbReference type="InterPro" id="IPR027354">
    <property type="entry name" value="YcgL_dom"/>
</dbReference>
<dbReference type="PANTHER" id="PTHR38109">
    <property type="entry name" value="PROTEIN YCGL"/>
    <property type="match status" value="1"/>
</dbReference>
<dbReference type="PANTHER" id="PTHR38109:SF1">
    <property type="entry name" value="PROTEIN YCGL"/>
    <property type="match status" value="1"/>
</dbReference>
<dbReference type="Pfam" id="PF05166">
    <property type="entry name" value="YcgL"/>
    <property type="match status" value="1"/>
</dbReference>
<dbReference type="SUPFAM" id="SSF160191">
    <property type="entry name" value="YcgL-like"/>
    <property type="match status" value="1"/>
</dbReference>
<dbReference type="PROSITE" id="PS51648">
    <property type="entry name" value="YCGL"/>
    <property type="match status" value="1"/>
</dbReference>